<accession>Q5UR11</accession>
<evidence type="ECO:0000255" key="1"/>
<evidence type="ECO:0000305" key="2"/>
<proteinExistence type="inferred from homology"/>
<dbReference type="EMBL" id="AY653733">
    <property type="protein sequence ID" value="AAV50417.1"/>
    <property type="molecule type" value="Genomic_DNA"/>
</dbReference>
<dbReference type="SMR" id="Q5UR11"/>
<dbReference type="CAZy" id="GT2">
    <property type="family name" value="Glycosyltransferase Family 2"/>
</dbReference>
<dbReference type="KEGG" id="vg:9924742"/>
<dbReference type="Proteomes" id="UP000001134">
    <property type="component" value="Genome"/>
</dbReference>
<dbReference type="CDD" id="cd03360">
    <property type="entry name" value="LbH_AT_putative"/>
    <property type="match status" value="1"/>
</dbReference>
<dbReference type="Gene3D" id="3.40.50.20">
    <property type="match status" value="1"/>
</dbReference>
<dbReference type="Gene3D" id="2.160.10.10">
    <property type="entry name" value="Hexapeptide repeat proteins"/>
    <property type="match status" value="1"/>
</dbReference>
<dbReference type="InterPro" id="IPR020019">
    <property type="entry name" value="AcTrfase_PglD-like"/>
</dbReference>
<dbReference type="InterPro" id="IPR029044">
    <property type="entry name" value="Nucleotide-diphossugar_trans"/>
</dbReference>
<dbReference type="InterPro" id="IPR041561">
    <property type="entry name" value="PglD_N"/>
</dbReference>
<dbReference type="InterPro" id="IPR050179">
    <property type="entry name" value="Trans_hexapeptide_repeat"/>
</dbReference>
<dbReference type="InterPro" id="IPR011004">
    <property type="entry name" value="Trimer_LpxA-like_sf"/>
</dbReference>
<dbReference type="NCBIfam" id="TIGR03570">
    <property type="entry name" value="NeuD_NnaD"/>
    <property type="match status" value="1"/>
</dbReference>
<dbReference type="PANTHER" id="PTHR43300">
    <property type="entry name" value="ACETYLTRANSFERASE"/>
    <property type="match status" value="1"/>
</dbReference>
<dbReference type="PANTHER" id="PTHR43300:SF7">
    <property type="entry name" value="UDP-N-ACETYLBACILLOSAMINE N-ACETYLTRANSFERASE"/>
    <property type="match status" value="1"/>
</dbReference>
<dbReference type="Pfam" id="PF17836">
    <property type="entry name" value="PglD_N"/>
    <property type="match status" value="1"/>
</dbReference>
<dbReference type="SUPFAM" id="SSF53448">
    <property type="entry name" value="Nucleotide-diphospho-sugar transferases"/>
    <property type="match status" value="1"/>
</dbReference>
<dbReference type="SUPFAM" id="SSF51161">
    <property type="entry name" value="Trimeric LpxA-like enzymes"/>
    <property type="match status" value="1"/>
</dbReference>
<organismHost>
    <name type="scientific">Acanthamoeba polyphaga</name>
    <name type="common">Amoeba</name>
    <dbReference type="NCBI Taxonomy" id="5757"/>
</organismHost>
<comment type="similarity">
    <text evidence="2">Belongs to the mimivirus L137 family.</text>
</comment>
<name>YL142_MIMIV</name>
<feature type="signal peptide" evidence="1">
    <location>
        <begin position="1"/>
        <end position="19"/>
    </location>
</feature>
<feature type="chain" id="PRO_0000041832" description="Uncharacterized protein L142">
    <location>
        <begin position="20"/>
        <end position="490"/>
    </location>
</feature>
<keyword id="KW-1185">Reference proteome</keyword>
<keyword id="KW-0732">Signal</keyword>
<organism>
    <name type="scientific">Acanthamoeba polyphaga mimivirus</name>
    <name type="common">APMV</name>
    <dbReference type="NCBI Taxonomy" id="212035"/>
    <lineage>
        <taxon>Viruses</taxon>
        <taxon>Varidnaviria</taxon>
        <taxon>Bamfordvirae</taxon>
        <taxon>Nucleocytoviricota</taxon>
        <taxon>Megaviricetes</taxon>
        <taxon>Imitervirales</taxon>
        <taxon>Mimiviridae</taxon>
        <taxon>Megamimivirinae</taxon>
        <taxon>Mimivirus</taxon>
        <taxon>Mimivirus bradfordmassiliense</taxon>
    </lineage>
</organism>
<gene>
    <name type="ordered locus">MIMI_L142</name>
</gene>
<reference key="1">
    <citation type="journal article" date="2004" name="Science">
        <title>The 1.2-megabase genome sequence of Mimivirus.</title>
        <authorList>
            <person name="Raoult D."/>
            <person name="Audic S."/>
            <person name="Robert C."/>
            <person name="Abergel C."/>
            <person name="Renesto P."/>
            <person name="Ogata H."/>
            <person name="La Scola B."/>
            <person name="Susan M."/>
            <person name="Claverie J.-M."/>
        </authorList>
    </citation>
    <scope>NUCLEOTIDE SEQUENCE [LARGE SCALE GENOMIC DNA]</scope>
    <source>
        <strain>Rowbotham-Bradford</strain>
    </source>
</reference>
<protein>
    <recommendedName>
        <fullName>Uncharacterized protein L142</fullName>
    </recommendedName>
</protein>
<sequence length="490" mass="55998">MSITSVSLYVYLICAGGHAKQVIDIFLDNGIEIKGIFDDNKTGQFYRGTQIIGVISDITKYQSEPFFCTVGDNQIREKISQTVGNVEWINCISKLAYISPSVVIGKGNYVGTHSKILADSQLGDFNIVNEGATLTHDNIIGDFNHIAPNVSVGGRVKIGNFNLIGTNSTVNPDILISNNIIIGSGATVVKSLVDPGIYIGTPCKKIIKNISDKCTCFPDNKPLYNEYTEDKSMENTENNKQKIPCFVLIYDQVDIIKKCLSFFTKYNSRLDIIVIENFSQNTNETIKPYVMNLLNKKKIWKYYLFENNIMNNAYHMALQHAIKTYLDPKKYPYTLITDGDLTIDNEDWIEEQINIMESNKNIYVSSCSLDTSNLPTETFPEATSWTKTGIDRGNYIEDNTGIFSLLLKTVDVIDLMVFLDSKNLRFLDSLINHYCYNYKYKIWARTKKSKAYHLTWDLYKDLDHPYTKMKRENIYLWSQNLTCKFDLFEN</sequence>